<reference evidence="6" key="1">
    <citation type="journal article" date="2002" name="Gene">
        <title>The odorant-binding proteins of Drosophila melanogaster: annotation and characterization of a divergent gene family.</title>
        <authorList>
            <person name="Graham L.A."/>
            <person name="Davies P.L."/>
        </authorList>
    </citation>
    <scope>NUCLEOTIDE SEQUENCE [MRNA]</scope>
    <source>
        <strain evidence="6">Canton-S</strain>
    </source>
</reference>
<reference evidence="4 5" key="2">
    <citation type="journal article" date="2000" name="Science">
        <title>The genome sequence of Drosophila melanogaster.</title>
        <authorList>
            <person name="Adams M.D."/>
            <person name="Celniker S.E."/>
            <person name="Holt R.A."/>
            <person name="Evans C.A."/>
            <person name="Gocayne J.D."/>
            <person name="Amanatides P.G."/>
            <person name="Scherer S.E."/>
            <person name="Li P.W."/>
            <person name="Hoskins R.A."/>
            <person name="Galle R.F."/>
            <person name="George R.A."/>
            <person name="Lewis S.E."/>
            <person name="Richards S."/>
            <person name="Ashburner M."/>
            <person name="Henderson S.N."/>
            <person name="Sutton G.G."/>
            <person name="Wortman J.R."/>
            <person name="Yandell M.D."/>
            <person name="Zhang Q."/>
            <person name="Chen L.X."/>
            <person name="Brandon R.C."/>
            <person name="Rogers Y.-H.C."/>
            <person name="Blazej R.G."/>
            <person name="Champe M."/>
            <person name="Pfeiffer B.D."/>
            <person name="Wan K.H."/>
            <person name="Doyle C."/>
            <person name="Baxter E.G."/>
            <person name="Helt G."/>
            <person name="Nelson C.R."/>
            <person name="Miklos G.L.G."/>
            <person name="Abril J.F."/>
            <person name="Agbayani A."/>
            <person name="An H.-J."/>
            <person name="Andrews-Pfannkoch C."/>
            <person name="Baldwin D."/>
            <person name="Ballew R.M."/>
            <person name="Basu A."/>
            <person name="Baxendale J."/>
            <person name="Bayraktaroglu L."/>
            <person name="Beasley E.M."/>
            <person name="Beeson K.Y."/>
            <person name="Benos P.V."/>
            <person name="Berman B.P."/>
            <person name="Bhandari D."/>
            <person name="Bolshakov S."/>
            <person name="Borkova D."/>
            <person name="Botchan M.R."/>
            <person name="Bouck J."/>
            <person name="Brokstein P."/>
            <person name="Brottier P."/>
            <person name="Burtis K.C."/>
            <person name="Busam D.A."/>
            <person name="Butler H."/>
            <person name="Cadieu E."/>
            <person name="Center A."/>
            <person name="Chandra I."/>
            <person name="Cherry J.M."/>
            <person name="Cawley S."/>
            <person name="Dahlke C."/>
            <person name="Davenport L.B."/>
            <person name="Davies P."/>
            <person name="de Pablos B."/>
            <person name="Delcher A."/>
            <person name="Deng Z."/>
            <person name="Mays A.D."/>
            <person name="Dew I."/>
            <person name="Dietz S.M."/>
            <person name="Dodson K."/>
            <person name="Doup L.E."/>
            <person name="Downes M."/>
            <person name="Dugan-Rocha S."/>
            <person name="Dunkov B.C."/>
            <person name="Dunn P."/>
            <person name="Durbin K.J."/>
            <person name="Evangelista C.C."/>
            <person name="Ferraz C."/>
            <person name="Ferriera S."/>
            <person name="Fleischmann W."/>
            <person name="Fosler C."/>
            <person name="Gabrielian A.E."/>
            <person name="Garg N.S."/>
            <person name="Gelbart W.M."/>
            <person name="Glasser K."/>
            <person name="Glodek A."/>
            <person name="Gong F."/>
            <person name="Gorrell J.H."/>
            <person name="Gu Z."/>
            <person name="Guan P."/>
            <person name="Harris M."/>
            <person name="Harris N.L."/>
            <person name="Harvey D.A."/>
            <person name="Heiman T.J."/>
            <person name="Hernandez J.R."/>
            <person name="Houck J."/>
            <person name="Hostin D."/>
            <person name="Houston K.A."/>
            <person name="Howland T.J."/>
            <person name="Wei M.-H."/>
            <person name="Ibegwam C."/>
            <person name="Jalali M."/>
            <person name="Kalush F."/>
            <person name="Karpen G.H."/>
            <person name="Ke Z."/>
            <person name="Kennison J.A."/>
            <person name="Ketchum K.A."/>
            <person name="Kimmel B.E."/>
            <person name="Kodira C.D."/>
            <person name="Kraft C.L."/>
            <person name="Kravitz S."/>
            <person name="Kulp D."/>
            <person name="Lai Z."/>
            <person name="Lasko P."/>
            <person name="Lei Y."/>
            <person name="Levitsky A.A."/>
            <person name="Li J.H."/>
            <person name="Li Z."/>
            <person name="Liang Y."/>
            <person name="Lin X."/>
            <person name="Liu X."/>
            <person name="Mattei B."/>
            <person name="McIntosh T.C."/>
            <person name="McLeod M.P."/>
            <person name="McPherson D."/>
            <person name="Merkulov G."/>
            <person name="Milshina N.V."/>
            <person name="Mobarry C."/>
            <person name="Morris J."/>
            <person name="Moshrefi A."/>
            <person name="Mount S.M."/>
            <person name="Moy M."/>
            <person name="Murphy B."/>
            <person name="Murphy L."/>
            <person name="Muzny D.M."/>
            <person name="Nelson D.L."/>
            <person name="Nelson D.R."/>
            <person name="Nelson K.A."/>
            <person name="Nixon K."/>
            <person name="Nusskern D.R."/>
            <person name="Pacleb J.M."/>
            <person name="Palazzolo M."/>
            <person name="Pittman G.S."/>
            <person name="Pan S."/>
            <person name="Pollard J."/>
            <person name="Puri V."/>
            <person name="Reese M.G."/>
            <person name="Reinert K."/>
            <person name="Remington K."/>
            <person name="Saunders R.D.C."/>
            <person name="Scheeler F."/>
            <person name="Shen H."/>
            <person name="Shue B.C."/>
            <person name="Siden-Kiamos I."/>
            <person name="Simpson M."/>
            <person name="Skupski M.P."/>
            <person name="Smith T.J."/>
            <person name="Spier E."/>
            <person name="Spradling A.C."/>
            <person name="Stapleton M."/>
            <person name="Strong R."/>
            <person name="Sun E."/>
            <person name="Svirskas R."/>
            <person name="Tector C."/>
            <person name="Turner R."/>
            <person name="Venter E."/>
            <person name="Wang A.H."/>
            <person name="Wang X."/>
            <person name="Wang Z.-Y."/>
            <person name="Wassarman D.A."/>
            <person name="Weinstock G.M."/>
            <person name="Weissenbach J."/>
            <person name="Williams S.M."/>
            <person name="Woodage T."/>
            <person name="Worley K.C."/>
            <person name="Wu D."/>
            <person name="Yang S."/>
            <person name="Yao Q.A."/>
            <person name="Ye J."/>
            <person name="Yeh R.-F."/>
            <person name="Zaveri J.S."/>
            <person name="Zhan M."/>
            <person name="Zhang G."/>
            <person name="Zhao Q."/>
            <person name="Zheng L."/>
            <person name="Zheng X.H."/>
            <person name="Zhong F.N."/>
            <person name="Zhong W."/>
            <person name="Zhou X."/>
            <person name="Zhu S.C."/>
            <person name="Zhu X."/>
            <person name="Smith H.O."/>
            <person name="Gibbs R.A."/>
            <person name="Myers E.W."/>
            <person name="Rubin G.M."/>
            <person name="Venter J.C."/>
        </authorList>
    </citation>
    <scope>NUCLEOTIDE SEQUENCE [LARGE SCALE GENOMIC DNA]</scope>
    <source>
        <strain evidence="3">Berkeley</strain>
    </source>
</reference>
<reference evidence="4 5" key="3">
    <citation type="journal article" date="2002" name="Genome Biol.">
        <title>Annotation of the Drosophila melanogaster euchromatic genome: a systematic review.</title>
        <authorList>
            <person name="Misra S."/>
            <person name="Crosby M.A."/>
            <person name="Mungall C.J."/>
            <person name="Matthews B.B."/>
            <person name="Campbell K.S."/>
            <person name="Hradecky P."/>
            <person name="Huang Y."/>
            <person name="Kaminker J.S."/>
            <person name="Millburn G.H."/>
            <person name="Prochnik S.E."/>
            <person name="Smith C.D."/>
            <person name="Tupy J.L."/>
            <person name="Whitfield E.J."/>
            <person name="Bayraktaroglu L."/>
            <person name="Berman B.P."/>
            <person name="Bettencourt B.R."/>
            <person name="Celniker S.E."/>
            <person name="de Grey A.D.N.J."/>
            <person name="Drysdale R.A."/>
            <person name="Harris N.L."/>
            <person name="Richter J."/>
            <person name="Russo S."/>
            <person name="Schroeder A.J."/>
            <person name="Shu S.Q."/>
            <person name="Stapleton M."/>
            <person name="Yamada C."/>
            <person name="Ashburner M."/>
            <person name="Gelbart W.M."/>
            <person name="Rubin G.M."/>
            <person name="Lewis S.E."/>
        </authorList>
    </citation>
    <scope>GENOME REANNOTATION</scope>
    <source>
        <strain>Berkeley</strain>
    </source>
</reference>
<reference evidence="4" key="4">
    <citation type="journal article" date="2002" name="Genome Res.">
        <title>Genome-wide analysis of the odorant-binding protein gene family in Drosophila melanogaster.</title>
        <authorList>
            <person name="Hekmat-Scafe D.S."/>
            <person name="Scafe C.R."/>
            <person name="McKinney A.J."/>
            <person name="Tanouye M.A."/>
        </authorList>
    </citation>
    <scope>IDENTIFICATION</scope>
</reference>
<protein>
    <recommendedName>
        <fullName>General odorant-binding protein 57b</fullName>
    </recommendedName>
</protein>
<proteinExistence type="evidence at transcript level"/>
<name>OB57B_DROME</name>
<feature type="signal peptide" evidence="2">
    <location>
        <begin position="1"/>
        <end position="22"/>
    </location>
</feature>
<feature type="chain" id="PRO_0000012573" description="General odorant-binding protein 57b" evidence="2">
    <location>
        <begin position="23"/>
        <end position="141"/>
    </location>
</feature>
<feature type="disulfide bond" evidence="1">
    <location>
        <begin position="39"/>
        <end position="77"/>
    </location>
</feature>
<feature type="disulfide bond" evidence="1">
    <location>
        <begin position="73"/>
        <end position="120"/>
    </location>
</feature>
<feature type="disulfide bond" evidence="1">
    <location>
        <begin position="111"/>
        <end position="129"/>
    </location>
</feature>
<evidence type="ECO:0000250" key="1"/>
<evidence type="ECO:0000255" key="2"/>
<evidence type="ECO:0000269" key="3">
    <source>
    </source>
</evidence>
<evidence type="ECO:0000305" key="4"/>
<evidence type="ECO:0000312" key="5">
    <source>
        <dbReference type="EMBL" id="AAM68409.1"/>
    </source>
</evidence>
<evidence type="ECO:0000312" key="6">
    <source>
        <dbReference type="EMBL" id="AAM69285.1"/>
    </source>
</evidence>
<sequence length="141" mass="16663">MFIYRLVFIAPLILLLFSLAKARHPFDIFHWNWQDFQECLQVNNITIGEYEKYARHETLDYLLNEKVDLRYKCNIKCQLERDSTKWLNAQGRMDLDLMNTTDKASKSITKCMEKAPEELCAYSFRLVMCAFKAGHPVIDSE</sequence>
<gene>
    <name evidence="5" type="primary">Obp57b</name>
    <name type="ORF">CG30142</name>
</gene>
<keyword id="KW-1015">Disulfide bond</keyword>
<keyword id="KW-0552">Olfaction</keyword>
<keyword id="KW-1185">Reference proteome</keyword>
<keyword id="KW-0716">Sensory transduction</keyword>
<keyword id="KW-0732">Signal</keyword>
<keyword id="KW-0813">Transport</keyword>
<accession>Q8MKJ4</accession>
<organism>
    <name type="scientific">Drosophila melanogaster</name>
    <name type="common">Fruit fly</name>
    <dbReference type="NCBI Taxonomy" id="7227"/>
    <lineage>
        <taxon>Eukaryota</taxon>
        <taxon>Metazoa</taxon>
        <taxon>Ecdysozoa</taxon>
        <taxon>Arthropoda</taxon>
        <taxon>Hexapoda</taxon>
        <taxon>Insecta</taxon>
        <taxon>Pterygota</taxon>
        <taxon>Neoptera</taxon>
        <taxon>Endopterygota</taxon>
        <taxon>Diptera</taxon>
        <taxon>Brachycera</taxon>
        <taxon>Muscomorpha</taxon>
        <taxon>Ephydroidea</taxon>
        <taxon>Drosophilidae</taxon>
        <taxon>Drosophila</taxon>
        <taxon>Sophophora</taxon>
    </lineage>
</organism>
<comment type="function">
    <text evidence="4">Present in the aqueous fluid surrounding olfactory sensory dendrites and are thought to aid in the capture and transport of hydrophobic odorants into and through this fluid.</text>
</comment>
<comment type="similarity">
    <text evidence="2">Belongs to the PBP/GOBP family.</text>
</comment>
<dbReference type="EMBL" id="AF457147">
    <property type="protein sequence ID" value="AAM69285.1"/>
    <property type="molecule type" value="mRNA"/>
</dbReference>
<dbReference type="EMBL" id="AE013599">
    <property type="protein sequence ID" value="AAM68409.1"/>
    <property type="molecule type" value="Genomic_DNA"/>
</dbReference>
<dbReference type="RefSeq" id="NP_001286632.1">
    <property type="nucleotide sequence ID" value="NM_001299703.1"/>
</dbReference>
<dbReference type="RefSeq" id="NP_725965.1">
    <property type="nucleotide sequence ID" value="NM_166394.3"/>
</dbReference>
<dbReference type="SMR" id="Q8MKJ4"/>
<dbReference type="FunCoup" id="Q8MKJ4">
    <property type="interactions" value="46"/>
</dbReference>
<dbReference type="STRING" id="7227.FBpp0309582"/>
<dbReference type="PaxDb" id="7227-FBpp0085605"/>
<dbReference type="EnsemblMetazoa" id="FBtr0086293">
    <property type="protein sequence ID" value="FBpp0085605"/>
    <property type="gene ID" value="FBgn0043534"/>
</dbReference>
<dbReference type="EnsemblMetazoa" id="FBtr0342691">
    <property type="protein sequence ID" value="FBpp0309582"/>
    <property type="gene ID" value="FBgn0043534"/>
</dbReference>
<dbReference type="GeneID" id="246669"/>
<dbReference type="KEGG" id="dme:Dmel_CG30142"/>
<dbReference type="AGR" id="FB:FBgn0043534"/>
<dbReference type="CTD" id="246669"/>
<dbReference type="FlyBase" id="FBgn0043534">
    <property type="gene designation" value="Obp57b"/>
</dbReference>
<dbReference type="VEuPathDB" id="VectorBase:FBgn0043534"/>
<dbReference type="GeneTree" id="ENSGT00540000073618"/>
<dbReference type="HOGENOM" id="CLU_1588250_0_0_1"/>
<dbReference type="InParanoid" id="Q8MKJ4"/>
<dbReference type="OMA" id="WKDFQEC"/>
<dbReference type="OrthoDB" id="7820309at2759"/>
<dbReference type="PhylomeDB" id="Q8MKJ4"/>
<dbReference type="BioGRID-ORCS" id="246669">
    <property type="hits" value="0 hits in 1 CRISPR screen"/>
</dbReference>
<dbReference type="GenomeRNAi" id="246669"/>
<dbReference type="PRO" id="PR:Q8MKJ4"/>
<dbReference type="Proteomes" id="UP000000803">
    <property type="component" value="Chromosome 2R"/>
</dbReference>
<dbReference type="Bgee" id="FBgn0043534">
    <property type="expression patterns" value="Expressed in peripheral glial cell (Drosophila) in imaginal disc-derived wing and 52 other cell types or tissues"/>
</dbReference>
<dbReference type="ExpressionAtlas" id="Q8MKJ4">
    <property type="expression patterns" value="baseline and differential"/>
</dbReference>
<dbReference type="GO" id="GO:0005576">
    <property type="term" value="C:extracellular region"/>
    <property type="evidence" value="ECO:0000255"/>
    <property type="project" value="FlyBase"/>
</dbReference>
<dbReference type="GO" id="GO:0005549">
    <property type="term" value="F:odorant binding"/>
    <property type="evidence" value="ECO:0000250"/>
    <property type="project" value="FlyBase"/>
</dbReference>
<dbReference type="GO" id="GO:1990834">
    <property type="term" value="P:response to odorant"/>
    <property type="evidence" value="ECO:0000303"/>
    <property type="project" value="UniProtKB"/>
</dbReference>
<dbReference type="GO" id="GO:0007606">
    <property type="term" value="P:sensory perception of chemical stimulus"/>
    <property type="evidence" value="ECO:0000250"/>
    <property type="project" value="FlyBase"/>
</dbReference>
<dbReference type="GO" id="GO:0007608">
    <property type="term" value="P:sensory perception of smell"/>
    <property type="evidence" value="ECO:0007669"/>
    <property type="project" value="UniProtKB-KW"/>
</dbReference>
<dbReference type="CDD" id="cd23992">
    <property type="entry name" value="PBP_GOBP"/>
    <property type="match status" value="1"/>
</dbReference>
<dbReference type="FunFam" id="1.10.238.20:FF:000007">
    <property type="entry name" value="Odorant-binding protein 57b"/>
    <property type="match status" value="1"/>
</dbReference>
<dbReference type="Gene3D" id="1.10.238.20">
    <property type="entry name" value="Pheromone/general odorant binding protein domain"/>
    <property type="match status" value="1"/>
</dbReference>
<dbReference type="InterPro" id="IPR036728">
    <property type="entry name" value="PBP_GOBP_sf"/>
</dbReference>
<dbReference type="SUPFAM" id="SSF47565">
    <property type="entry name" value="Insect pheromone/odorant-binding proteins"/>
    <property type="match status" value="1"/>
</dbReference>